<keyword id="KW-0249">Electron transport</keyword>
<keyword id="KW-0349">Heme</keyword>
<keyword id="KW-0408">Iron</keyword>
<keyword id="KW-0472">Membrane</keyword>
<keyword id="KW-0479">Metal-binding</keyword>
<keyword id="KW-0496">Mitochondrion</keyword>
<keyword id="KW-0999">Mitochondrion inner membrane</keyword>
<keyword id="KW-0679">Respiratory chain</keyword>
<keyword id="KW-0812">Transmembrane</keyword>
<keyword id="KW-1133">Transmembrane helix</keyword>
<keyword id="KW-0813">Transport</keyword>
<keyword id="KW-0830">Ubiquinone</keyword>
<name>CYB_POEOC</name>
<feature type="chain" id="PRO_0000061420" description="Cytochrome b">
    <location>
        <begin position="1"/>
        <end position="379"/>
    </location>
</feature>
<feature type="transmembrane region" description="Helical" evidence="2">
    <location>
        <begin position="33"/>
        <end position="53"/>
    </location>
</feature>
<feature type="transmembrane region" description="Helical" evidence="2">
    <location>
        <begin position="77"/>
        <end position="98"/>
    </location>
</feature>
<feature type="transmembrane region" description="Helical" evidence="2">
    <location>
        <begin position="113"/>
        <end position="133"/>
    </location>
</feature>
<feature type="transmembrane region" description="Helical" evidence="2">
    <location>
        <begin position="178"/>
        <end position="198"/>
    </location>
</feature>
<feature type="transmembrane region" description="Helical" evidence="2">
    <location>
        <begin position="226"/>
        <end position="246"/>
    </location>
</feature>
<feature type="transmembrane region" description="Helical" evidence="2">
    <location>
        <begin position="288"/>
        <end position="308"/>
    </location>
</feature>
<feature type="transmembrane region" description="Helical" evidence="2">
    <location>
        <begin position="320"/>
        <end position="340"/>
    </location>
</feature>
<feature type="transmembrane region" description="Helical" evidence="2">
    <location>
        <begin position="347"/>
        <end position="367"/>
    </location>
</feature>
<feature type="binding site" description="axial binding residue" evidence="2">
    <location>
        <position position="83"/>
    </location>
    <ligand>
        <name>heme b</name>
        <dbReference type="ChEBI" id="CHEBI:60344"/>
        <label>b562</label>
    </ligand>
    <ligandPart>
        <name>Fe</name>
        <dbReference type="ChEBI" id="CHEBI:18248"/>
    </ligandPart>
</feature>
<feature type="binding site" description="axial binding residue" evidence="2">
    <location>
        <position position="97"/>
    </location>
    <ligand>
        <name>heme b</name>
        <dbReference type="ChEBI" id="CHEBI:60344"/>
        <label>b566</label>
    </ligand>
    <ligandPart>
        <name>Fe</name>
        <dbReference type="ChEBI" id="CHEBI:18248"/>
    </ligandPart>
</feature>
<feature type="binding site" description="axial binding residue" evidence="2">
    <location>
        <position position="182"/>
    </location>
    <ligand>
        <name>heme b</name>
        <dbReference type="ChEBI" id="CHEBI:60344"/>
        <label>b562</label>
    </ligand>
    <ligandPart>
        <name>Fe</name>
        <dbReference type="ChEBI" id="CHEBI:18248"/>
    </ligandPart>
</feature>
<feature type="binding site" description="axial binding residue" evidence="2">
    <location>
        <position position="196"/>
    </location>
    <ligand>
        <name>heme b</name>
        <dbReference type="ChEBI" id="CHEBI:60344"/>
        <label>b566</label>
    </ligand>
    <ligandPart>
        <name>Fe</name>
        <dbReference type="ChEBI" id="CHEBI:18248"/>
    </ligandPart>
</feature>
<feature type="binding site" evidence="2">
    <location>
        <position position="201"/>
    </location>
    <ligand>
        <name>a ubiquinone</name>
        <dbReference type="ChEBI" id="CHEBI:16389"/>
    </ligand>
</feature>
<feature type="sequence variant" description="In strain: Isolate BD.">
    <original>N</original>
    <variation>D</variation>
    <location>
        <position position="16"/>
    </location>
</feature>
<feature type="sequence variant" description="In strain: Isolate BD and Isolate LP.">
    <original>G</original>
    <variation>V</variation>
    <location>
        <position position="189"/>
    </location>
</feature>
<feature type="sequence variant" description="In strain: Isolate BD.">
    <original>T</original>
    <variation>I</variation>
    <location>
        <position position="233"/>
    </location>
</feature>
<feature type="sequence variant" description="In strain: Isolate LP.">
    <original>S</original>
    <variation>Y</variation>
    <location>
        <position position="310"/>
    </location>
</feature>
<evidence type="ECO:0000250" key="1"/>
<evidence type="ECO:0000250" key="2">
    <source>
        <dbReference type="UniProtKB" id="P00157"/>
    </source>
</evidence>
<evidence type="ECO:0000255" key="3">
    <source>
        <dbReference type="PROSITE-ProRule" id="PRU00967"/>
    </source>
</evidence>
<evidence type="ECO:0000255" key="4">
    <source>
        <dbReference type="PROSITE-ProRule" id="PRU00968"/>
    </source>
</evidence>
<protein>
    <recommendedName>
        <fullName>Cytochrome b</fullName>
    </recommendedName>
    <alternativeName>
        <fullName>Complex III subunit 3</fullName>
    </alternativeName>
    <alternativeName>
        <fullName>Complex III subunit III</fullName>
    </alternativeName>
    <alternativeName>
        <fullName>Cytochrome b-c1 complex subunit 3</fullName>
    </alternativeName>
    <alternativeName>
        <fullName>Ubiquinol-cytochrome-c reductase complex cytochrome b subunit</fullName>
    </alternativeName>
</protein>
<dbReference type="EMBL" id="AF412140">
    <property type="protein sequence ID" value="AAM45787.1"/>
    <property type="molecule type" value="Genomic_DNA"/>
</dbReference>
<dbReference type="EMBL" id="AF412141">
    <property type="protein sequence ID" value="AAM45788.1"/>
    <property type="molecule type" value="Genomic_DNA"/>
</dbReference>
<dbReference type="EMBL" id="AF412142">
    <property type="protein sequence ID" value="AAM45789.1"/>
    <property type="molecule type" value="Genomic_DNA"/>
</dbReference>
<dbReference type="SMR" id="Q8M3J6"/>
<dbReference type="GO" id="GO:0005743">
    <property type="term" value="C:mitochondrial inner membrane"/>
    <property type="evidence" value="ECO:0007669"/>
    <property type="project" value="UniProtKB-SubCell"/>
</dbReference>
<dbReference type="GO" id="GO:0045275">
    <property type="term" value="C:respiratory chain complex III"/>
    <property type="evidence" value="ECO:0007669"/>
    <property type="project" value="InterPro"/>
</dbReference>
<dbReference type="GO" id="GO:0046872">
    <property type="term" value="F:metal ion binding"/>
    <property type="evidence" value="ECO:0007669"/>
    <property type="project" value="UniProtKB-KW"/>
</dbReference>
<dbReference type="GO" id="GO:0008121">
    <property type="term" value="F:ubiquinol-cytochrome-c reductase activity"/>
    <property type="evidence" value="ECO:0007669"/>
    <property type="project" value="InterPro"/>
</dbReference>
<dbReference type="GO" id="GO:0006122">
    <property type="term" value="P:mitochondrial electron transport, ubiquinol to cytochrome c"/>
    <property type="evidence" value="ECO:0007669"/>
    <property type="project" value="TreeGrafter"/>
</dbReference>
<dbReference type="CDD" id="cd00290">
    <property type="entry name" value="cytochrome_b_C"/>
    <property type="match status" value="1"/>
</dbReference>
<dbReference type="CDD" id="cd00284">
    <property type="entry name" value="Cytochrome_b_N"/>
    <property type="match status" value="1"/>
</dbReference>
<dbReference type="FunFam" id="1.20.810.10:FF:000002">
    <property type="entry name" value="Cytochrome b"/>
    <property type="match status" value="1"/>
</dbReference>
<dbReference type="Gene3D" id="1.20.810.10">
    <property type="entry name" value="Cytochrome Bc1 Complex, Chain C"/>
    <property type="match status" value="1"/>
</dbReference>
<dbReference type="InterPro" id="IPR005798">
    <property type="entry name" value="Cyt_b/b6_C"/>
</dbReference>
<dbReference type="InterPro" id="IPR036150">
    <property type="entry name" value="Cyt_b/b6_C_sf"/>
</dbReference>
<dbReference type="InterPro" id="IPR005797">
    <property type="entry name" value="Cyt_b/b6_N"/>
</dbReference>
<dbReference type="InterPro" id="IPR027387">
    <property type="entry name" value="Cytb/b6-like_sf"/>
</dbReference>
<dbReference type="InterPro" id="IPR030689">
    <property type="entry name" value="Cytochrome_b"/>
</dbReference>
<dbReference type="InterPro" id="IPR048260">
    <property type="entry name" value="Cytochrome_b_C_euk/bac"/>
</dbReference>
<dbReference type="InterPro" id="IPR048259">
    <property type="entry name" value="Cytochrome_b_N_euk/bac"/>
</dbReference>
<dbReference type="InterPro" id="IPR016174">
    <property type="entry name" value="Di-haem_cyt_TM"/>
</dbReference>
<dbReference type="PANTHER" id="PTHR19271">
    <property type="entry name" value="CYTOCHROME B"/>
    <property type="match status" value="1"/>
</dbReference>
<dbReference type="PANTHER" id="PTHR19271:SF16">
    <property type="entry name" value="CYTOCHROME B"/>
    <property type="match status" value="1"/>
</dbReference>
<dbReference type="Pfam" id="PF00032">
    <property type="entry name" value="Cytochrom_B_C"/>
    <property type="match status" value="1"/>
</dbReference>
<dbReference type="Pfam" id="PF00033">
    <property type="entry name" value="Cytochrome_B"/>
    <property type="match status" value="1"/>
</dbReference>
<dbReference type="PIRSF" id="PIRSF038885">
    <property type="entry name" value="COB"/>
    <property type="match status" value="1"/>
</dbReference>
<dbReference type="SUPFAM" id="SSF81648">
    <property type="entry name" value="a domain/subunit of cytochrome bc1 complex (Ubiquinol-cytochrome c reductase)"/>
    <property type="match status" value="1"/>
</dbReference>
<dbReference type="SUPFAM" id="SSF81342">
    <property type="entry name" value="Transmembrane di-heme cytochromes"/>
    <property type="match status" value="1"/>
</dbReference>
<dbReference type="PROSITE" id="PS51003">
    <property type="entry name" value="CYTB_CTER"/>
    <property type="match status" value="1"/>
</dbReference>
<dbReference type="PROSITE" id="PS51002">
    <property type="entry name" value="CYTB_NTER"/>
    <property type="match status" value="1"/>
</dbReference>
<comment type="function">
    <text evidence="2">Component of the ubiquinol-cytochrome c reductase complex (complex III or cytochrome b-c1 complex) that is part of the mitochondrial respiratory chain. The b-c1 complex mediates electron transfer from ubiquinol to cytochrome c. Contributes to the generation of a proton gradient across the mitochondrial membrane that is then used for ATP synthesis.</text>
</comment>
<comment type="cofactor">
    <cofactor evidence="2">
        <name>heme b</name>
        <dbReference type="ChEBI" id="CHEBI:60344"/>
    </cofactor>
    <text evidence="2">Binds 2 heme b groups non-covalently.</text>
</comment>
<comment type="subunit">
    <text evidence="2">The cytochrome bc1 complex contains 3 respiratory subunits (MT-CYB, CYC1 and UQCRFS1), 2 core proteins (UQCRC1 and UQCRC2) and probably 6 low-molecular weight proteins.</text>
</comment>
<comment type="subcellular location">
    <subcellularLocation>
        <location evidence="2">Mitochondrion inner membrane</location>
        <topology evidence="2">Multi-pass membrane protein</topology>
    </subcellularLocation>
</comment>
<comment type="miscellaneous">
    <text evidence="1">Heme 1 (or BL or b562) is low-potential and absorbs at about 562 nm, and heme 2 (or BH or b566) is high-potential and absorbs at about 566 nm.</text>
</comment>
<comment type="similarity">
    <text evidence="3 4">Belongs to the cytochrome b family.</text>
</comment>
<comment type="caution">
    <text evidence="2">The full-length protein contains only eight transmembrane helices, not nine as predicted by bioinformatics tools.</text>
</comment>
<organism>
    <name type="scientific">Poeciliopsis occidentalis</name>
    <name type="common">Gila topminnow</name>
    <name type="synonym">Heterandria occidentalis</name>
    <dbReference type="NCBI Taxonomy" id="68464"/>
    <lineage>
        <taxon>Eukaryota</taxon>
        <taxon>Metazoa</taxon>
        <taxon>Chordata</taxon>
        <taxon>Craniata</taxon>
        <taxon>Vertebrata</taxon>
        <taxon>Euteleostomi</taxon>
        <taxon>Actinopterygii</taxon>
        <taxon>Neopterygii</taxon>
        <taxon>Teleostei</taxon>
        <taxon>Neoteleostei</taxon>
        <taxon>Acanthomorphata</taxon>
        <taxon>Ovalentaria</taxon>
        <taxon>Atherinomorphae</taxon>
        <taxon>Cyprinodontiformes</taxon>
        <taxon>Poeciliidae</taxon>
        <taxon>Poeciliinae</taxon>
        <taxon>Poeciliopsis</taxon>
    </lineage>
</organism>
<proteinExistence type="inferred from homology"/>
<geneLocation type="mitochondrion"/>
<gene>
    <name type="primary">mt-cyb</name>
    <name type="synonym">cob</name>
    <name type="synonym">cytb</name>
    <name type="synonym">mtcyb</name>
</gene>
<accession>Q8M3J6</accession>
<accession>Q8M3J5</accession>
<accession>Q8M3J7</accession>
<reference key="1">
    <citation type="journal article" date="2002" name="Evolution">
        <title>Historical biogeography of the livebearing fish genus Poeciliopsis (Poeciliidae: Cyprinodontiformes).</title>
        <authorList>
            <person name="Mateos M."/>
            <person name="Sanjur O.I."/>
            <person name="Vrijenhoek R.C."/>
        </authorList>
    </citation>
    <scope>NUCLEOTIDE SEQUENCE [GENOMIC DNA]</scope>
    <source>
        <strain>Isolate Alt</strain>
        <strain>Isolate BD</strain>
        <strain>Isolate LP</strain>
    </source>
</reference>
<sequence length="379" mass="42261">MASLRKSHPLLKIANNALVDLPAPINISAWWNFGSLLGLCLIAQILTGLFLAMHYTSDISTAFSSVAHICRDVNYGWLIRNMHANGASFFFICIYLHIGRGLYYGSYLYKETWNVGVVLLLLVMMTAFVGYVLPWGQMSFWGATVITNLLSAVPYMGDTLVQWIWGGFSVDNATLTRFFAFHFLLPFIGAAATLVHLIFLHETGSNNPTGLNSDADKISFHPYFSYKDILGFTFLLTALIALALFSPNLLGDPENFTPANPLVTPPHIKPEWYFLFAYAILRSIPNKLGGVLALLASILVLMVVPLLHTSKQRSLTFRPFTQVLFWLLIADVAILTWIGGMPVEHPFIIIGQVASFLYFSLFLVLAPTAAWMENKILGW</sequence>